<gene>
    <name evidence="1" type="primary">plsX</name>
    <name type="ordered locus">ACP_1925</name>
</gene>
<keyword id="KW-0963">Cytoplasm</keyword>
<keyword id="KW-0444">Lipid biosynthesis</keyword>
<keyword id="KW-0443">Lipid metabolism</keyword>
<keyword id="KW-0594">Phospholipid biosynthesis</keyword>
<keyword id="KW-1208">Phospholipid metabolism</keyword>
<keyword id="KW-1185">Reference proteome</keyword>
<keyword id="KW-0808">Transferase</keyword>
<comment type="function">
    <text evidence="1">Catalyzes the reversible formation of acyl-phosphate (acyl-PO(4)) from acyl-[acyl-carrier-protein] (acyl-ACP). This enzyme utilizes acyl-ACP as fatty acyl donor, but not acyl-CoA.</text>
</comment>
<comment type="catalytic activity">
    <reaction evidence="1">
        <text>a fatty acyl-[ACP] + phosphate = an acyl phosphate + holo-[ACP]</text>
        <dbReference type="Rhea" id="RHEA:42292"/>
        <dbReference type="Rhea" id="RHEA-COMP:9685"/>
        <dbReference type="Rhea" id="RHEA-COMP:14125"/>
        <dbReference type="ChEBI" id="CHEBI:43474"/>
        <dbReference type="ChEBI" id="CHEBI:59918"/>
        <dbReference type="ChEBI" id="CHEBI:64479"/>
        <dbReference type="ChEBI" id="CHEBI:138651"/>
        <dbReference type="EC" id="2.3.1.274"/>
    </reaction>
</comment>
<comment type="pathway">
    <text evidence="1">Lipid metabolism; phospholipid metabolism.</text>
</comment>
<comment type="subunit">
    <text evidence="1">Homodimer. Probably interacts with PlsY.</text>
</comment>
<comment type="subcellular location">
    <subcellularLocation>
        <location evidence="1">Cytoplasm</location>
    </subcellularLocation>
    <text evidence="1">Associated with the membrane possibly through PlsY.</text>
</comment>
<comment type="similarity">
    <text evidence="1">Belongs to the PlsX family.</text>
</comment>
<organism>
    <name type="scientific">Acidobacterium capsulatum (strain ATCC 51196 / DSM 11244 / BCRC 80197 / JCM 7670 / NBRC 15755 / NCIMB 13165 / 161)</name>
    <dbReference type="NCBI Taxonomy" id="240015"/>
    <lineage>
        <taxon>Bacteria</taxon>
        <taxon>Pseudomonadati</taxon>
        <taxon>Acidobacteriota</taxon>
        <taxon>Terriglobia</taxon>
        <taxon>Terriglobales</taxon>
        <taxon>Acidobacteriaceae</taxon>
        <taxon>Acidobacterium</taxon>
    </lineage>
</organism>
<proteinExistence type="inferred from homology"/>
<evidence type="ECO:0000255" key="1">
    <source>
        <dbReference type="HAMAP-Rule" id="MF_00019"/>
    </source>
</evidence>
<feature type="chain" id="PRO_1000193118" description="Phosphate acyltransferase">
    <location>
        <begin position="1"/>
        <end position="337"/>
    </location>
</feature>
<sequence length="337" mass="35956">MLTDIALDAWGSDKAPEPEIKGAILACRHLPVRVHLVGQQDVLEPLLAQALRGARLPIEIVHASERIAMDEKAAQAVRTKRDSSMRVGLKLVREKKVAGFFTAGNTGAAMATAKMVLGALPGVDRPALALAVPTLTGPTILLDVGANTDCKAHNLEQFAVMGEMYARKVLKVDRPRVGILSVGEEEGKGNDLTREAFPLIKALPLNFIGNVEGRDIYNGHCDVIVCDGFVGNVALKTSEGILKLVREMLKISLKSTVTAQVGALLSRRAFDEFKRRLDPSEYGGTPLLGVRGVCIIGHGSSNDRAIMNGIRVAAEFATAGVNQQLEADFAAPADSHA</sequence>
<dbReference type="EC" id="2.3.1.274" evidence="1"/>
<dbReference type="EMBL" id="CP001472">
    <property type="protein sequence ID" value="ACO34455.1"/>
    <property type="molecule type" value="Genomic_DNA"/>
</dbReference>
<dbReference type="RefSeq" id="WP_015897036.1">
    <property type="nucleotide sequence ID" value="NC_012483.1"/>
</dbReference>
<dbReference type="SMR" id="C1F8B4"/>
<dbReference type="FunCoup" id="C1F8B4">
    <property type="interactions" value="294"/>
</dbReference>
<dbReference type="STRING" id="240015.ACP_1925"/>
<dbReference type="KEGG" id="aca:ACP_1925"/>
<dbReference type="eggNOG" id="COG0416">
    <property type="taxonomic scope" value="Bacteria"/>
</dbReference>
<dbReference type="HOGENOM" id="CLU_039379_1_0_0"/>
<dbReference type="InParanoid" id="C1F8B4"/>
<dbReference type="OrthoDB" id="9806408at2"/>
<dbReference type="UniPathway" id="UPA00085"/>
<dbReference type="Proteomes" id="UP000002207">
    <property type="component" value="Chromosome"/>
</dbReference>
<dbReference type="GO" id="GO:0005737">
    <property type="term" value="C:cytoplasm"/>
    <property type="evidence" value="ECO:0007669"/>
    <property type="project" value="UniProtKB-SubCell"/>
</dbReference>
<dbReference type="GO" id="GO:0043811">
    <property type="term" value="F:phosphate:acyl-[acyl carrier protein] acyltransferase activity"/>
    <property type="evidence" value="ECO:0007669"/>
    <property type="project" value="UniProtKB-UniRule"/>
</dbReference>
<dbReference type="GO" id="GO:0006633">
    <property type="term" value="P:fatty acid biosynthetic process"/>
    <property type="evidence" value="ECO:0007669"/>
    <property type="project" value="UniProtKB-UniRule"/>
</dbReference>
<dbReference type="GO" id="GO:0008654">
    <property type="term" value="P:phospholipid biosynthetic process"/>
    <property type="evidence" value="ECO:0007669"/>
    <property type="project" value="UniProtKB-KW"/>
</dbReference>
<dbReference type="Gene3D" id="3.40.718.10">
    <property type="entry name" value="Isopropylmalate Dehydrogenase"/>
    <property type="match status" value="1"/>
</dbReference>
<dbReference type="HAMAP" id="MF_00019">
    <property type="entry name" value="PlsX"/>
    <property type="match status" value="1"/>
</dbReference>
<dbReference type="InterPro" id="IPR003664">
    <property type="entry name" value="FA_synthesis"/>
</dbReference>
<dbReference type="InterPro" id="IPR012281">
    <property type="entry name" value="Phospholipid_synth_PlsX-like"/>
</dbReference>
<dbReference type="NCBIfam" id="TIGR00182">
    <property type="entry name" value="plsX"/>
    <property type="match status" value="1"/>
</dbReference>
<dbReference type="PANTHER" id="PTHR30100">
    <property type="entry name" value="FATTY ACID/PHOSPHOLIPID SYNTHESIS PROTEIN PLSX"/>
    <property type="match status" value="1"/>
</dbReference>
<dbReference type="PANTHER" id="PTHR30100:SF1">
    <property type="entry name" value="PHOSPHATE ACYLTRANSFERASE"/>
    <property type="match status" value="1"/>
</dbReference>
<dbReference type="Pfam" id="PF02504">
    <property type="entry name" value="FA_synthesis"/>
    <property type="match status" value="1"/>
</dbReference>
<dbReference type="PIRSF" id="PIRSF002465">
    <property type="entry name" value="Phsphlp_syn_PlsX"/>
    <property type="match status" value="1"/>
</dbReference>
<dbReference type="SUPFAM" id="SSF53659">
    <property type="entry name" value="Isocitrate/Isopropylmalate dehydrogenase-like"/>
    <property type="match status" value="1"/>
</dbReference>
<name>PLSX_ACIC5</name>
<protein>
    <recommendedName>
        <fullName evidence="1">Phosphate acyltransferase</fullName>
        <ecNumber evidence="1">2.3.1.274</ecNumber>
    </recommendedName>
    <alternativeName>
        <fullName evidence="1">Acyl-ACP phosphotransacylase</fullName>
    </alternativeName>
    <alternativeName>
        <fullName evidence="1">Acyl-[acyl-carrier-protein]--phosphate acyltransferase</fullName>
    </alternativeName>
    <alternativeName>
        <fullName evidence="1">Phosphate-acyl-ACP acyltransferase</fullName>
    </alternativeName>
</protein>
<reference key="1">
    <citation type="journal article" date="2009" name="Appl. Environ. Microbiol.">
        <title>Three genomes from the phylum Acidobacteria provide insight into the lifestyles of these microorganisms in soils.</title>
        <authorList>
            <person name="Ward N.L."/>
            <person name="Challacombe J.F."/>
            <person name="Janssen P.H."/>
            <person name="Henrissat B."/>
            <person name="Coutinho P.M."/>
            <person name="Wu M."/>
            <person name="Xie G."/>
            <person name="Haft D.H."/>
            <person name="Sait M."/>
            <person name="Badger J."/>
            <person name="Barabote R.D."/>
            <person name="Bradley B."/>
            <person name="Brettin T.S."/>
            <person name="Brinkac L.M."/>
            <person name="Bruce D."/>
            <person name="Creasy T."/>
            <person name="Daugherty S.C."/>
            <person name="Davidsen T.M."/>
            <person name="DeBoy R.T."/>
            <person name="Detter J.C."/>
            <person name="Dodson R.J."/>
            <person name="Durkin A.S."/>
            <person name="Ganapathy A."/>
            <person name="Gwinn-Giglio M."/>
            <person name="Han C.S."/>
            <person name="Khouri H."/>
            <person name="Kiss H."/>
            <person name="Kothari S.P."/>
            <person name="Madupu R."/>
            <person name="Nelson K.E."/>
            <person name="Nelson W.C."/>
            <person name="Paulsen I."/>
            <person name="Penn K."/>
            <person name="Ren Q."/>
            <person name="Rosovitz M.J."/>
            <person name="Selengut J.D."/>
            <person name="Shrivastava S."/>
            <person name="Sullivan S.A."/>
            <person name="Tapia R."/>
            <person name="Thompson L.S."/>
            <person name="Watkins K.L."/>
            <person name="Yang Q."/>
            <person name="Yu C."/>
            <person name="Zafar N."/>
            <person name="Zhou L."/>
            <person name="Kuske C.R."/>
        </authorList>
    </citation>
    <scope>NUCLEOTIDE SEQUENCE [LARGE SCALE GENOMIC DNA]</scope>
    <source>
        <strain>ATCC 51196 / DSM 11244 / BCRC 80197 / JCM 7670 / NBRC 15755 / NCIMB 13165 / 161</strain>
    </source>
</reference>
<accession>C1F8B4</accession>